<gene>
    <name type="primary">DIR13</name>
    <name type="ordered locus">At4g11190</name>
    <name type="ORF">T22B4.170</name>
</gene>
<name>DIR13_ARATH</name>
<protein>
    <recommendedName>
        <fullName>Dirigent protein 13</fullName>
        <shortName>AtDIR13</shortName>
    </recommendedName>
</protein>
<reference key="1">
    <citation type="journal article" date="1999" name="Nature">
        <title>Sequence and analysis of chromosome 4 of the plant Arabidopsis thaliana.</title>
        <authorList>
            <person name="Mayer K.F.X."/>
            <person name="Schueller C."/>
            <person name="Wambutt R."/>
            <person name="Murphy G."/>
            <person name="Volckaert G."/>
            <person name="Pohl T."/>
            <person name="Duesterhoeft A."/>
            <person name="Stiekema W."/>
            <person name="Entian K.-D."/>
            <person name="Terryn N."/>
            <person name="Harris B."/>
            <person name="Ansorge W."/>
            <person name="Brandt P."/>
            <person name="Grivell L.A."/>
            <person name="Rieger M."/>
            <person name="Weichselgartner M."/>
            <person name="de Simone V."/>
            <person name="Obermaier B."/>
            <person name="Mache R."/>
            <person name="Mueller M."/>
            <person name="Kreis M."/>
            <person name="Delseny M."/>
            <person name="Puigdomenech P."/>
            <person name="Watson M."/>
            <person name="Schmidtheini T."/>
            <person name="Reichert B."/>
            <person name="Portetelle D."/>
            <person name="Perez-Alonso M."/>
            <person name="Boutry M."/>
            <person name="Bancroft I."/>
            <person name="Vos P."/>
            <person name="Hoheisel J."/>
            <person name="Zimmermann W."/>
            <person name="Wedler H."/>
            <person name="Ridley P."/>
            <person name="Langham S.-A."/>
            <person name="McCullagh B."/>
            <person name="Bilham L."/>
            <person name="Robben J."/>
            <person name="van der Schueren J."/>
            <person name="Grymonprez B."/>
            <person name="Chuang Y.-J."/>
            <person name="Vandenbussche F."/>
            <person name="Braeken M."/>
            <person name="Weltjens I."/>
            <person name="Voet M."/>
            <person name="Bastiaens I."/>
            <person name="Aert R."/>
            <person name="Defoor E."/>
            <person name="Weitzenegger T."/>
            <person name="Bothe G."/>
            <person name="Ramsperger U."/>
            <person name="Hilbert H."/>
            <person name="Braun M."/>
            <person name="Holzer E."/>
            <person name="Brandt A."/>
            <person name="Peters S."/>
            <person name="van Staveren M."/>
            <person name="Dirkse W."/>
            <person name="Mooijman P."/>
            <person name="Klein Lankhorst R."/>
            <person name="Rose M."/>
            <person name="Hauf J."/>
            <person name="Koetter P."/>
            <person name="Berneiser S."/>
            <person name="Hempel S."/>
            <person name="Feldpausch M."/>
            <person name="Lamberth S."/>
            <person name="Van den Daele H."/>
            <person name="De Keyser A."/>
            <person name="Buysshaert C."/>
            <person name="Gielen J."/>
            <person name="Villarroel R."/>
            <person name="De Clercq R."/>
            <person name="van Montagu M."/>
            <person name="Rogers J."/>
            <person name="Cronin A."/>
            <person name="Quail M.A."/>
            <person name="Bray-Allen S."/>
            <person name="Clark L."/>
            <person name="Doggett J."/>
            <person name="Hall S."/>
            <person name="Kay M."/>
            <person name="Lennard N."/>
            <person name="McLay K."/>
            <person name="Mayes R."/>
            <person name="Pettett A."/>
            <person name="Rajandream M.A."/>
            <person name="Lyne M."/>
            <person name="Benes V."/>
            <person name="Rechmann S."/>
            <person name="Borkova D."/>
            <person name="Bloecker H."/>
            <person name="Scharfe M."/>
            <person name="Grimm M."/>
            <person name="Loehnert T.-H."/>
            <person name="Dose S."/>
            <person name="de Haan M."/>
            <person name="Maarse A.C."/>
            <person name="Schaefer M."/>
            <person name="Mueller-Auer S."/>
            <person name="Gabel C."/>
            <person name="Fuchs M."/>
            <person name="Fartmann B."/>
            <person name="Granderath K."/>
            <person name="Dauner D."/>
            <person name="Herzl A."/>
            <person name="Neumann S."/>
            <person name="Argiriou A."/>
            <person name="Vitale D."/>
            <person name="Liguori R."/>
            <person name="Piravandi E."/>
            <person name="Massenet O."/>
            <person name="Quigley F."/>
            <person name="Clabauld G."/>
            <person name="Muendlein A."/>
            <person name="Felber R."/>
            <person name="Schnabl S."/>
            <person name="Hiller R."/>
            <person name="Schmidt W."/>
            <person name="Lecharny A."/>
            <person name="Aubourg S."/>
            <person name="Chefdor F."/>
            <person name="Cooke R."/>
            <person name="Berger C."/>
            <person name="Monfort A."/>
            <person name="Casacuberta E."/>
            <person name="Gibbons T."/>
            <person name="Weber N."/>
            <person name="Vandenbol M."/>
            <person name="Bargues M."/>
            <person name="Terol J."/>
            <person name="Torres A."/>
            <person name="Perez-Perez A."/>
            <person name="Purnelle B."/>
            <person name="Bent E."/>
            <person name="Johnson S."/>
            <person name="Tacon D."/>
            <person name="Jesse T."/>
            <person name="Heijnen L."/>
            <person name="Schwarz S."/>
            <person name="Scholler P."/>
            <person name="Heber S."/>
            <person name="Francs P."/>
            <person name="Bielke C."/>
            <person name="Frishman D."/>
            <person name="Haase D."/>
            <person name="Lemcke K."/>
            <person name="Mewes H.-W."/>
            <person name="Stocker S."/>
            <person name="Zaccaria P."/>
            <person name="Bevan M."/>
            <person name="Wilson R.K."/>
            <person name="de la Bastide M."/>
            <person name="Habermann K."/>
            <person name="Parnell L."/>
            <person name="Dedhia N."/>
            <person name="Gnoj L."/>
            <person name="Schutz K."/>
            <person name="Huang E."/>
            <person name="Spiegel L."/>
            <person name="Sekhon M."/>
            <person name="Murray J."/>
            <person name="Sheet P."/>
            <person name="Cordes M."/>
            <person name="Abu-Threideh J."/>
            <person name="Stoneking T."/>
            <person name="Kalicki J."/>
            <person name="Graves T."/>
            <person name="Harmon G."/>
            <person name="Edwards J."/>
            <person name="Latreille P."/>
            <person name="Courtney L."/>
            <person name="Cloud J."/>
            <person name="Abbott A."/>
            <person name="Scott K."/>
            <person name="Johnson D."/>
            <person name="Minx P."/>
            <person name="Bentley D."/>
            <person name="Fulton B."/>
            <person name="Miller N."/>
            <person name="Greco T."/>
            <person name="Kemp K."/>
            <person name="Kramer J."/>
            <person name="Fulton L."/>
            <person name="Mardis E."/>
            <person name="Dante M."/>
            <person name="Pepin K."/>
            <person name="Hillier L.W."/>
            <person name="Nelson J."/>
            <person name="Spieth J."/>
            <person name="Ryan E."/>
            <person name="Andrews S."/>
            <person name="Geisel C."/>
            <person name="Layman D."/>
            <person name="Du H."/>
            <person name="Ali J."/>
            <person name="Berghoff A."/>
            <person name="Jones K."/>
            <person name="Drone K."/>
            <person name="Cotton M."/>
            <person name="Joshu C."/>
            <person name="Antonoiu B."/>
            <person name="Zidanic M."/>
            <person name="Strong C."/>
            <person name="Sun H."/>
            <person name="Lamar B."/>
            <person name="Yordan C."/>
            <person name="Ma P."/>
            <person name="Zhong J."/>
            <person name="Preston R."/>
            <person name="Vil D."/>
            <person name="Shekher M."/>
            <person name="Matero A."/>
            <person name="Shah R."/>
            <person name="Swaby I.K."/>
            <person name="O'Shaughnessy A."/>
            <person name="Rodriguez M."/>
            <person name="Hoffman J."/>
            <person name="Till S."/>
            <person name="Granat S."/>
            <person name="Shohdy N."/>
            <person name="Hasegawa A."/>
            <person name="Hameed A."/>
            <person name="Lodhi M."/>
            <person name="Johnson A."/>
            <person name="Chen E."/>
            <person name="Marra M.A."/>
            <person name="Martienssen R."/>
            <person name="McCombie W.R."/>
        </authorList>
    </citation>
    <scope>NUCLEOTIDE SEQUENCE [LARGE SCALE GENOMIC DNA]</scope>
    <source>
        <strain>cv. Columbia</strain>
    </source>
</reference>
<reference key="2">
    <citation type="journal article" date="2017" name="Plant J.">
        <title>Araport11: a complete reannotation of the Arabidopsis thaliana reference genome.</title>
        <authorList>
            <person name="Cheng C.Y."/>
            <person name="Krishnakumar V."/>
            <person name="Chan A.P."/>
            <person name="Thibaud-Nissen F."/>
            <person name="Schobel S."/>
            <person name="Town C.D."/>
        </authorList>
    </citation>
    <scope>GENOME REANNOTATION</scope>
    <source>
        <strain>cv. Columbia</strain>
    </source>
</reference>
<reference key="3">
    <citation type="journal article" date="2003" name="Science">
        <title>Empirical analysis of transcriptional activity in the Arabidopsis genome.</title>
        <authorList>
            <person name="Yamada K."/>
            <person name="Lim J."/>
            <person name="Dale J.M."/>
            <person name="Chen H."/>
            <person name="Shinn P."/>
            <person name="Palm C.J."/>
            <person name="Southwick A.M."/>
            <person name="Wu H.C."/>
            <person name="Kim C.J."/>
            <person name="Nguyen M."/>
            <person name="Pham P.K."/>
            <person name="Cheuk R.F."/>
            <person name="Karlin-Newmann G."/>
            <person name="Liu S.X."/>
            <person name="Lam B."/>
            <person name="Sakano H."/>
            <person name="Wu T."/>
            <person name="Yu G."/>
            <person name="Miranda M."/>
            <person name="Quach H.L."/>
            <person name="Tripp M."/>
            <person name="Chang C.H."/>
            <person name="Lee J.M."/>
            <person name="Toriumi M.J."/>
            <person name="Chan M.M."/>
            <person name="Tang C.C."/>
            <person name="Onodera C.S."/>
            <person name="Deng J.M."/>
            <person name="Akiyama K."/>
            <person name="Ansari Y."/>
            <person name="Arakawa T."/>
            <person name="Banh J."/>
            <person name="Banno F."/>
            <person name="Bowser L."/>
            <person name="Brooks S.Y."/>
            <person name="Carninci P."/>
            <person name="Chao Q."/>
            <person name="Choy N."/>
            <person name="Enju A."/>
            <person name="Goldsmith A.D."/>
            <person name="Gurjal M."/>
            <person name="Hansen N.F."/>
            <person name="Hayashizaki Y."/>
            <person name="Johnson-Hopson C."/>
            <person name="Hsuan V.W."/>
            <person name="Iida K."/>
            <person name="Karnes M."/>
            <person name="Khan S."/>
            <person name="Koesema E."/>
            <person name="Ishida J."/>
            <person name="Jiang P.X."/>
            <person name="Jones T."/>
            <person name="Kawai J."/>
            <person name="Kamiya A."/>
            <person name="Meyers C."/>
            <person name="Nakajima M."/>
            <person name="Narusaka M."/>
            <person name="Seki M."/>
            <person name="Sakurai T."/>
            <person name="Satou M."/>
            <person name="Tamse R."/>
            <person name="Vaysberg M."/>
            <person name="Wallender E.K."/>
            <person name="Wong C."/>
            <person name="Yamamura Y."/>
            <person name="Yuan S."/>
            <person name="Shinozaki K."/>
            <person name="Davis R.W."/>
            <person name="Theologis A."/>
            <person name="Ecker J.R."/>
        </authorList>
    </citation>
    <scope>NUCLEOTIDE SEQUENCE [LARGE SCALE MRNA]</scope>
    <source>
        <strain>cv. Columbia</strain>
    </source>
</reference>
<reference key="4">
    <citation type="journal article" date="2007" name="Phytochemistry">
        <title>Dirigent proteins in conifer defense II: Extended gene discovery, phylogeny, and constitutive and stress-induced gene expression in spruce (Picea spp.).</title>
        <authorList>
            <person name="Ralph S.G."/>
            <person name="Jancsik S."/>
            <person name="Bohlmann J."/>
        </authorList>
    </citation>
    <scope>GENE FAMILY</scope>
    <scope>NOMENCLATURE</scope>
</reference>
<reference key="5">
    <citation type="journal article" date="2012" name="J. Biol. Chem.">
        <title>Opposite stereoselectivities of dirigent proteins in Arabidopsis and schizandra species.</title>
        <authorList>
            <person name="Kim K.-W."/>
            <person name="Moinuddin S.G.A."/>
            <person name="Atwell K.M."/>
            <person name="Costa M.A."/>
            <person name="Davin L.B."/>
            <person name="Lewis N.G."/>
        </authorList>
    </citation>
    <scope>TISSUE SPECIFICITY</scope>
    <scope>DEVELOPMENTAL STAGE</scope>
    <scope>GENE FAMILY</scope>
    <source>
        <strain>cv. Columbia</strain>
    </source>
</reference>
<evidence type="ECO:0000250" key="1"/>
<evidence type="ECO:0000255" key="2"/>
<evidence type="ECO:0000269" key="3">
    <source>
    </source>
</evidence>
<evidence type="ECO:0000305" key="4"/>
<comment type="function">
    <text evidence="1">Dirigent proteins impart stereoselectivity on the phenoxy radical-coupling reaction, yielding optically active lignans from two molecules of coniferyl alcohol in the biosynthesis of lignans, flavonolignans, and alkaloids and thus plays a central role in plant secondary metabolism.</text>
</comment>
<comment type="subunit">
    <text evidence="1">Homodimer.</text>
</comment>
<comment type="subcellular location">
    <subcellularLocation>
        <location evidence="1">Secreted</location>
        <location evidence="1">Extracellular space</location>
        <location evidence="1">Apoplast</location>
    </subcellularLocation>
</comment>
<comment type="tissue specificity">
    <text evidence="3">Expressed in root vasculature and meristems, cotyledons, flowers, siliques, and leaf trichomes. Localized in the interfascicular/vascular cambia and developing xylem.</text>
</comment>
<comment type="developmental stage">
    <text evidence="3">In flowers, expressed in the vasculature of sepals, petals, stamen filaments, and the gynoecium stylar region. In siliques, observed in the stigmatic region and epidermal layers.</text>
</comment>
<comment type="similarity">
    <text evidence="4">Belongs to the plant dirigent protein family.</text>
</comment>
<proteinExistence type="evidence at transcript level"/>
<feature type="signal peptide" evidence="2">
    <location>
        <begin position="1"/>
        <end position="25"/>
    </location>
</feature>
<feature type="chain" id="PRO_0000422844" description="Dirigent protein 13">
    <location>
        <begin position="26"/>
        <end position="184"/>
    </location>
</feature>
<feature type="glycosylation site" description="N-linked (GlcNAc...) asparagine" evidence="2">
    <location>
        <position position="55"/>
    </location>
</feature>
<feature type="glycosylation site" description="N-linked (GlcNAc...) asparagine" evidence="2">
    <location>
        <position position="119"/>
    </location>
</feature>
<feature type="disulfide bond" evidence="1">
    <location>
        <begin position="36"/>
        <end position="182"/>
    </location>
</feature>
<accession>Q9T017</accession>
<sequence>MANQIYIISLIFLSVLLYQSTTVLSFRQPFNLAKPCKRFVFYLHNVAYDGDNTDNATSAAIVNPLGLGDFSFGKFVIMDNPVTMDQNMLSEQVARVQGFFFYHGKTKYDTWLSWSVVFNSTQHKGALNIMGENAFMEPTRDLPVVGGTGDFVMTRGIATFMTDLVEGSKYFRVKMDIKLYECYY</sequence>
<keyword id="KW-0052">Apoplast</keyword>
<keyword id="KW-1015">Disulfide bond</keyword>
<keyword id="KW-0325">Glycoprotein</keyword>
<keyword id="KW-1185">Reference proteome</keyword>
<keyword id="KW-0964">Secreted</keyword>
<keyword id="KW-0732">Signal</keyword>
<dbReference type="EMBL" id="AL049876">
    <property type="protein sequence ID" value="CAB43054.1"/>
    <property type="molecule type" value="Genomic_DNA"/>
</dbReference>
<dbReference type="EMBL" id="AL161531">
    <property type="protein sequence ID" value="CAB81220.1"/>
    <property type="molecule type" value="Genomic_DNA"/>
</dbReference>
<dbReference type="EMBL" id="CP002687">
    <property type="protein sequence ID" value="AEE82983.1"/>
    <property type="molecule type" value="Genomic_DNA"/>
</dbReference>
<dbReference type="EMBL" id="BT009718">
    <property type="protein sequence ID" value="AAP88352.1"/>
    <property type="molecule type" value="mRNA"/>
</dbReference>
<dbReference type="PIR" id="T08198">
    <property type="entry name" value="T08198"/>
</dbReference>
<dbReference type="RefSeq" id="NP_192858.1">
    <property type="nucleotide sequence ID" value="NM_117190.3"/>
</dbReference>
<dbReference type="SMR" id="Q9T017"/>
<dbReference type="FunCoup" id="Q9T017">
    <property type="interactions" value="156"/>
</dbReference>
<dbReference type="STRING" id="3702.Q9T017"/>
<dbReference type="GlyCosmos" id="Q9T017">
    <property type="glycosylation" value="2 sites, No reported glycans"/>
</dbReference>
<dbReference type="GlyGen" id="Q9T017">
    <property type="glycosylation" value="2 sites"/>
</dbReference>
<dbReference type="PaxDb" id="3702-AT4G11190.1"/>
<dbReference type="ProteomicsDB" id="224105"/>
<dbReference type="DNASU" id="826721"/>
<dbReference type="EnsemblPlants" id="AT4G11190.1">
    <property type="protein sequence ID" value="AT4G11190.1"/>
    <property type="gene ID" value="AT4G11190"/>
</dbReference>
<dbReference type="GeneID" id="826721"/>
<dbReference type="Gramene" id="AT4G11190.1">
    <property type="protein sequence ID" value="AT4G11190.1"/>
    <property type="gene ID" value="AT4G11190"/>
</dbReference>
<dbReference type="KEGG" id="ath:AT4G11190"/>
<dbReference type="Araport" id="AT4G11190"/>
<dbReference type="TAIR" id="AT4G11190"/>
<dbReference type="eggNOG" id="ENOG502RXV9">
    <property type="taxonomic scope" value="Eukaryota"/>
</dbReference>
<dbReference type="HOGENOM" id="CLU_087111_0_0_1"/>
<dbReference type="InParanoid" id="Q9T017"/>
<dbReference type="OMA" id="HNVAYDG"/>
<dbReference type="OrthoDB" id="1058558at2759"/>
<dbReference type="PhylomeDB" id="Q9T017"/>
<dbReference type="PRO" id="PR:Q9T017"/>
<dbReference type="Proteomes" id="UP000006548">
    <property type="component" value="Chromosome 4"/>
</dbReference>
<dbReference type="ExpressionAtlas" id="Q9T017">
    <property type="expression patterns" value="baseline and differential"/>
</dbReference>
<dbReference type="GO" id="GO:0048046">
    <property type="term" value="C:apoplast"/>
    <property type="evidence" value="ECO:0007669"/>
    <property type="project" value="UniProtKB-SubCell"/>
</dbReference>
<dbReference type="GO" id="GO:0009699">
    <property type="term" value="P:phenylpropanoid biosynthetic process"/>
    <property type="evidence" value="ECO:0007669"/>
    <property type="project" value="UniProtKB-ARBA"/>
</dbReference>
<dbReference type="Gene3D" id="2.40.480.10">
    <property type="entry name" value="Allene oxide cyclase-like"/>
    <property type="match status" value="1"/>
</dbReference>
<dbReference type="InterPro" id="IPR044859">
    <property type="entry name" value="Allene_oxi_cyc_Dirigent"/>
</dbReference>
<dbReference type="InterPro" id="IPR004265">
    <property type="entry name" value="Dirigent"/>
</dbReference>
<dbReference type="PANTHER" id="PTHR46442">
    <property type="entry name" value="DIRIGENT PROTEIN"/>
    <property type="match status" value="1"/>
</dbReference>
<dbReference type="PANTHER" id="PTHR46442:SF11">
    <property type="entry name" value="DIRIGENT PROTEIN 12-RELATED"/>
    <property type="match status" value="1"/>
</dbReference>
<dbReference type="Pfam" id="PF03018">
    <property type="entry name" value="Dirigent"/>
    <property type="match status" value="1"/>
</dbReference>
<organism>
    <name type="scientific">Arabidopsis thaliana</name>
    <name type="common">Mouse-ear cress</name>
    <dbReference type="NCBI Taxonomy" id="3702"/>
    <lineage>
        <taxon>Eukaryota</taxon>
        <taxon>Viridiplantae</taxon>
        <taxon>Streptophyta</taxon>
        <taxon>Embryophyta</taxon>
        <taxon>Tracheophyta</taxon>
        <taxon>Spermatophyta</taxon>
        <taxon>Magnoliopsida</taxon>
        <taxon>eudicotyledons</taxon>
        <taxon>Gunneridae</taxon>
        <taxon>Pentapetalae</taxon>
        <taxon>rosids</taxon>
        <taxon>malvids</taxon>
        <taxon>Brassicales</taxon>
        <taxon>Brassicaceae</taxon>
        <taxon>Camelineae</taxon>
        <taxon>Arabidopsis</taxon>
    </lineage>
</organism>